<evidence type="ECO:0000250" key="1"/>
<evidence type="ECO:0000250" key="2">
    <source>
        <dbReference type="UniProtKB" id="Q96RW4"/>
    </source>
</evidence>
<evidence type="ECO:0000255" key="3"/>
<evidence type="ECO:0000255" key="4">
    <source>
        <dbReference type="PROSITE-ProRule" id="PRU00210"/>
    </source>
</evidence>
<evidence type="ECO:0000255" key="5">
    <source>
        <dbReference type="PROSITE-ProRule" id="PRU00233"/>
    </source>
</evidence>
<evidence type="ECO:0000256" key="6">
    <source>
        <dbReference type="SAM" id="MobiDB-lite"/>
    </source>
</evidence>
<evidence type="ECO:0000303" key="7">
    <source>
    </source>
</evidence>
<evidence type="ECO:0000305" key="8"/>
<evidence type="ECO:0000312" key="9">
    <source>
        <dbReference type="EMBL" id="BAC32213.1"/>
    </source>
</evidence>
<accession>Q8BLI0</accession>
<accession>A2AM52</accession>
<name>ATL1_MOUSE</name>
<protein>
    <recommendedName>
        <fullName>ADAMTS-like protein 1</fullName>
        <shortName>ADAMTSL-1</shortName>
    </recommendedName>
    <alternativeName>
        <fullName>Punctin-1</fullName>
    </alternativeName>
</protein>
<feature type="signal peptide" evidence="1">
    <location>
        <begin position="1"/>
        <end position="28"/>
    </location>
</feature>
<feature type="chain" id="PRO_0000035861" description="ADAMTS-like protein 1">
    <location>
        <begin position="29"/>
        <end position="1745"/>
    </location>
</feature>
<feature type="domain" description="TSP type-1 1" evidence="4">
    <location>
        <begin position="33"/>
        <end position="82"/>
    </location>
</feature>
<feature type="domain" description="TSP type-1 2" evidence="4">
    <location>
        <begin position="376"/>
        <end position="424"/>
    </location>
</feature>
<feature type="domain" description="TSP type-1 3" evidence="4">
    <location>
        <begin position="436"/>
        <end position="493"/>
    </location>
</feature>
<feature type="domain" description="TSP type-1 4" evidence="4">
    <location>
        <begin position="522"/>
        <end position="584"/>
    </location>
</feature>
<feature type="domain" description="TSP type-1 5" evidence="4">
    <location>
        <begin position="607"/>
        <end position="667"/>
    </location>
</feature>
<feature type="domain" description="TSP type-1 6" evidence="4">
    <location>
        <begin position="703"/>
        <end position="762"/>
    </location>
</feature>
<feature type="domain" description="TSP type-1 7" evidence="4">
    <location>
        <begin position="763"/>
        <end position="825"/>
    </location>
</feature>
<feature type="domain" description="Ig-like C2-type 1">
    <location>
        <begin position="836"/>
        <end position="938"/>
    </location>
</feature>
<feature type="domain" description="Ig-like C2-type 2">
    <location>
        <begin position="1139"/>
        <end position="1241"/>
    </location>
</feature>
<feature type="domain" description="Ig-like C2-type 3">
    <location>
        <begin position="1261"/>
        <end position="1352"/>
    </location>
</feature>
<feature type="domain" description="Ig-like C2-type 4">
    <location>
        <begin position="1378"/>
        <end position="1468"/>
    </location>
</feature>
<feature type="domain" description="TSP type-1 8" evidence="4">
    <location>
        <begin position="1528"/>
        <end position="1591"/>
    </location>
</feature>
<feature type="domain" description="TSP type-1 9" evidence="4">
    <location>
        <begin position="1649"/>
        <end position="1709"/>
    </location>
</feature>
<feature type="domain" description="PLAC" evidence="5">
    <location>
        <begin position="1709"/>
        <end position="1745"/>
    </location>
</feature>
<feature type="region of interest" description="Disordered" evidence="6">
    <location>
        <begin position="966"/>
        <end position="991"/>
    </location>
</feature>
<feature type="region of interest" description="Disordered" evidence="6">
    <location>
        <begin position="1114"/>
        <end position="1137"/>
    </location>
</feature>
<feature type="compositionally biased region" description="Low complexity" evidence="6">
    <location>
        <begin position="1115"/>
        <end position="1126"/>
    </location>
</feature>
<feature type="glycosylation site" description="N-linked (GlcNAc...) asparagine" evidence="3">
    <location>
        <position position="251"/>
    </location>
</feature>
<feature type="glycosylation site" description="O-linked (Fuc...) serine" evidence="1">
    <location>
        <position position="310"/>
    </location>
</feature>
<feature type="glycosylation site" description="O-linked (Fuc...) serine" evidence="1">
    <location>
        <position position="391"/>
    </location>
</feature>
<feature type="glycosylation site" description="O-linked (Fuc...) threonine" evidence="1">
    <location>
        <position position="451"/>
    </location>
</feature>
<feature type="disulfide bond" evidence="1">
    <location>
        <begin position="45"/>
        <end position="76"/>
    </location>
</feature>
<feature type="disulfide bond" evidence="1">
    <location>
        <begin position="49"/>
        <end position="81"/>
    </location>
</feature>
<feature type="disulfide bond" evidence="1">
    <location>
        <begin position="60"/>
        <end position="66"/>
    </location>
</feature>
<feature type="disulfide bond" evidence="1">
    <location>
        <begin position="534"/>
        <end position="578"/>
    </location>
</feature>
<feature type="disulfide bond" evidence="1">
    <location>
        <begin position="538"/>
        <end position="583"/>
    </location>
</feature>
<feature type="disulfide bond" evidence="1">
    <location>
        <begin position="549"/>
        <end position="567"/>
    </location>
</feature>
<feature type="disulfide bond" evidence="1">
    <location>
        <begin position="775"/>
        <end position="819"/>
    </location>
</feature>
<feature type="disulfide bond" evidence="1">
    <location>
        <begin position="779"/>
        <end position="824"/>
    </location>
</feature>
<feature type="disulfide bond" evidence="1">
    <location>
        <begin position="790"/>
        <end position="807"/>
    </location>
</feature>
<feature type="disulfide bond" evidence="1">
    <location>
        <begin position="874"/>
        <end position="922"/>
    </location>
</feature>
<feature type="disulfide bond" evidence="1">
    <location>
        <begin position="1177"/>
        <end position="1225"/>
    </location>
</feature>
<feature type="disulfide bond" evidence="1">
    <location>
        <begin position="1283"/>
        <end position="1336"/>
    </location>
</feature>
<feature type="disulfide bond" evidence="1">
    <location>
        <begin position="1401"/>
        <end position="1452"/>
    </location>
</feature>
<feature type="splice variant" id="VSP_039332" description="In isoform 2." evidence="7">
    <original>SDGYKQIMPYDLYHPL</original>
    <variation>RSVQFTCLCMINQVPS</variation>
    <location>
        <begin position="362"/>
        <end position="377"/>
    </location>
</feature>
<feature type="splice variant" id="VSP_039333" description="In isoform 2." evidence="7">
    <location>
        <begin position="378"/>
        <end position="1745"/>
    </location>
</feature>
<keyword id="KW-0025">Alternative splicing</keyword>
<keyword id="KW-1015">Disulfide bond</keyword>
<keyword id="KW-0272">Extracellular matrix</keyword>
<keyword id="KW-0325">Glycoprotein</keyword>
<keyword id="KW-0393">Immunoglobulin domain</keyword>
<keyword id="KW-1185">Reference proteome</keyword>
<keyword id="KW-0677">Repeat</keyword>
<keyword id="KW-0964">Secreted</keyword>
<keyword id="KW-0732">Signal</keyword>
<organism evidence="9">
    <name type="scientific">Mus musculus</name>
    <name type="common">Mouse</name>
    <dbReference type="NCBI Taxonomy" id="10090"/>
    <lineage>
        <taxon>Eukaryota</taxon>
        <taxon>Metazoa</taxon>
        <taxon>Chordata</taxon>
        <taxon>Craniata</taxon>
        <taxon>Vertebrata</taxon>
        <taxon>Euteleostomi</taxon>
        <taxon>Mammalia</taxon>
        <taxon>Eutheria</taxon>
        <taxon>Euarchontoglires</taxon>
        <taxon>Glires</taxon>
        <taxon>Rodentia</taxon>
        <taxon>Myomorpha</taxon>
        <taxon>Muroidea</taxon>
        <taxon>Muridae</taxon>
        <taxon>Murinae</taxon>
        <taxon>Mus</taxon>
        <taxon>Mus</taxon>
    </lineage>
</organism>
<comment type="subunit">
    <text evidence="2">Monomer.</text>
</comment>
<comment type="subcellular location">
    <subcellularLocation>
        <location evidence="1">Secreted</location>
        <location evidence="1">Extracellular space</location>
        <location evidence="1">Extracellular matrix</location>
    </subcellularLocation>
</comment>
<comment type="alternative products">
    <event type="alternative splicing"/>
    <isoform>
        <id>Q8BLI0-1</id>
        <name>1</name>
        <sequence type="displayed"/>
    </isoform>
    <isoform>
        <id>Q8BLI0-2</id>
        <name>2</name>
        <sequence type="described" ref="VSP_039332 VSP_039333"/>
    </isoform>
</comment>
<comment type="PTM">
    <text evidence="1">Glycosylated (By similarity). O-fucosylated by POFUT2 on a serine or a threonine residue found within the consensus sequence C1-X(2)-(S/T)-C2-G of the TSP type-1 repeat domains where C1 and C2 are the first and second cysteine residue of the repeat, respectively. Fucosylated repeats can then be further glycosylated by the addition of a beta-1,3-glucose residue by the glucosyltransferase, B3GALTL. Fucosylation mediates the efficient secretion of ADAMTS family members. Can also be C-glycosylated with one or two mannose molecules on tryptophan residues within the consensus sequence W-X-X-W of the TPRs, and N-glycosylated. These other glycosylations can also facilitate secretion (By similarity).</text>
</comment>
<comment type="PTM">
    <text evidence="2">Disulfide bonds are present.</text>
</comment>
<comment type="caution">
    <text evidence="8">Although strongly similar to members of the ADAMTS family it lacks the metalloprotease and disintegrin-like domains which are typical of that family.</text>
</comment>
<dbReference type="EMBL" id="AK045085">
    <property type="protein sequence ID" value="BAC32213.1"/>
    <property type="molecule type" value="mRNA"/>
</dbReference>
<dbReference type="EMBL" id="AL772130">
    <property type="status" value="NOT_ANNOTATED_CDS"/>
    <property type="molecule type" value="Genomic_DNA"/>
</dbReference>
<dbReference type="EMBL" id="AL807242">
    <property type="status" value="NOT_ANNOTATED_CDS"/>
    <property type="molecule type" value="Genomic_DNA"/>
</dbReference>
<dbReference type="EMBL" id="AL824705">
    <property type="status" value="NOT_ANNOTATED_CDS"/>
    <property type="molecule type" value="Genomic_DNA"/>
</dbReference>
<dbReference type="RefSeq" id="NP_084243.3">
    <property type="nucleotide sequence ID" value="NM_029967.3"/>
</dbReference>
<dbReference type="FunCoup" id="Q8BLI0">
    <property type="interactions" value="124"/>
</dbReference>
<dbReference type="STRING" id="10090.ENSMUSP00000102796"/>
<dbReference type="GlyCosmos" id="Q8BLI0">
    <property type="glycosylation" value="4 sites, No reported glycans"/>
</dbReference>
<dbReference type="GlyGen" id="Q8BLI0">
    <property type="glycosylation" value="10 sites, 3 N-linked glycans (5 sites)"/>
</dbReference>
<dbReference type="iPTMnet" id="Q8BLI0"/>
<dbReference type="PhosphoSitePlus" id="Q8BLI0"/>
<dbReference type="jPOST" id="Q8BLI0"/>
<dbReference type="PaxDb" id="10090-ENSMUSP00000102796"/>
<dbReference type="ProteomicsDB" id="277066">
    <molecule id="Q8BLI0-1"/>
</dbReference>
<dbReference type="ProteomicsDB" id="277067">
    <molecule id="Q8BLI0-2"/>
</dbReference>
<dbReference type="Antibodypedia" id="24655">
    <property type="antibodies" value="164 antibodies from 24 providers"/>
</dbReference>
<dbReference type="DNASU" id="77739"/>
<dbReference type="Ensembl" id="ENSMUST00000141889.8">
    <molecule id="Q8BLI0-1"/>
    <property type="protein sequence ID" value="ENSMUSP00000119278.2"/>
    <property type="gene ID" value="ENSMUSG00000066113.17"/>
</dbReference>
<dbReference type="GeneID" id="77739"/>
<dbReference type="KEGG" id="mmu:77739"/>
<dbReference type="UCSC" id="uc008tlr.2">
    <molecule id="Q8BLI0-2"/>
    <property type="organism name" value="mouse"/>
</dbReference>
<dbReference type="AGR" id="MGI:1924989"/>
<dbReference type="CTD" id="92949"/>
<dbReference type="MGI" id="MGI:1924989">
    <property type="gene designation" value="Adamtsl1"/>
</dbReference>
<dbReference type="VEuPathDB" id="HostDB:ENSMUSG00000066113"/>
<dbReference type="eggNOG" id="KOG3538">
    <property type="taxonomic scope" value="Eukaryota"/>
</dbReference>
<dbReference type="GeneTree" id="ENSGT00940000156243"/>
<dbReference type="InParanoid" id="Q8BLI0"/>
<dbReference type="OrthoDB" id="5948003at2759"/>
<dbReference type="Reactome" id="R-MMU-5173214">
    <property type="pathway name" value="O-glycosylation of TSR domain-containing proteins"/>
</dbReference>
<dbReference type="BioGRID-ORCS" id="77739">
    <property type="hits" value="3 hits in 74 CRISPR screens"/>
</dbReference>
<dbReference type="ChiTaRS" id="Adamtsl1">
    <property type="organism name" value="mouse"/>
</dbReference>
<dbReference type="PRO" id="PR:Q8BLI0"/>
<dbReference type="Proteomes" id="UP000000589">
    <property type="component" value="Chromosome 4"/>
</dbReference>
<dbReference type="RNAct" id="Q8BLI0">
    <property type="molecule type" value="protein"/>
</dbReference>
<dbReference type="Bgee" id="ENSMUSG00000066113">
    <property type="expression patterns" value="Expressed in animal zygote and 149 other cell types or tissues"/>
</dbReference>
<dbReference type="ExpressionAtlas" id="Q8BLI0">
    <property type="expression patterns" value="baseline and differential"/>
</dbReference>
<dbReference type="GO" id="GO:0062023">
    <property type="term" value="C:collagen-containing extracellular matrix"/>
    <property type="evidence" value="ECO:0007005"/>
    <property type="project" value="BHF-UCL"/>
</dbReference>
<dbReference type="GO" id="GO:0005576">
    <property type="term" value="C:extracellular region"/>
    <property type="evidence" value="ECO:0007669"/>
    <property type="project" value="UniProtKB-KW"/>
</dbReference>
<dbReference type="GO" id="GO:0030198">
    <property type="term" value="P:extracellular matrix organization"/>
    <property type="evidence" value="ECO:0007669"/>
    <property type="project" value="InterPro"/>
</dbReference>
<dbReference type="CDD" id="cd00096">
    <property type="entry name" value="Ig"/>
    <property type="match status" value="2"/>
</dbReference>
<dbReference type="FunFam" id="2.20.100.10:FF:000011">
    <property type="entry name" value="A disintegrin and metalloproteinase with thrombospondin motifs 3"/>
    <property type="match status" value="1"/>
</dbReference>
<dbReference type="FunFam" id="2.20.100.10:FF:000005">
    <property type="entry name" value="ADAM metallopeptidase with thrombospondin type 1 motif 9"/>
    <property type="match status" value="1"/>
</dbReference>
<dbReference type="FunFam" id="2.20.100.10:FF:000025">
    <property type="entry name" value="ADAMTS like 1"/>
    <property type="match status" value="1"/>
</dbReference>
<dbReference type="FunFam" id="2.20.100.10:FF:000041">
    <property type="entry name" value="ADAMTS like 1"/>
    <property type="match status" value="1"/>
</dbReference>
<dbReference type="FunFam" id="2.60.120.830:FF:000002">
    <property type="entry name" value="ADAMTS like 1"/>
    <property type="match status" value="1"/>
</dbReference>
<dbReference type="FunFam" id="2.60.40.10:FF:000683">
    <property type="entry name" value="ADAMTS like 1"/>
    <property type="match status" value="1"/>
</dbReference>
<dbReference type="FunFam" id="2.60.40.10:FF:001073">
    <property type="entry name" value="ADAMTS like 1"/>
    <property type="match status" value="1"/>
</dbReference>
<dbReference type="FunFam" id="2.60.40.10:FF:000487">
    <property type="entry name" value="ADAMTS-like 3 isoform 1"/>
    <property type="match status" value="1"/>
</dbReference>
<dbReference type="FunFam" id="2.60.40.10:FF:000710">
    <property type="entry name" value="ADAMTS-like protein 1"/>
    <property type="match status" value="1"/>
</dbReference>
<dbReference type="FunFam" id="2.20.100.10:FF:000009">
    <property type="entry name" value="ADAMTS-like protein 3 isoform A"/>
    <property type="match status" value="2"/>
</dbReference>
<dbReference type="Gene3D" id="2.60.120.830">
    <property type="match status" value="1"/>
</dbReference>
<dbReference type="Gene3D" id="2.60.40.10">
    <property type="entry name" value="Immunoglobulins"/>
    <property type="match status" value="4"/>
</dbReference>
<dbReference type="Gene3D" id="2.20.100.10">
    <property type="entry name" value="Thrombospondin type-1 (TSP1) repeat"/>
    <property type="match status" value="10"/>
</dbReference>
<dbReference type="InterPro" id="IPR013273">
    <property type="entry name" value="ADAMTS/ADAMTS-like"/>
</dbReference>
<dbReference type="InterPro" id="IPR050439">
    <property type="entry name" value="ADAMTS_ADAMTS-like"/>
</dbReference>
<dbReference type="InterPro" id="IPR045371">
    <property type="entry name" value="ADAMTS_CR_3"/>
</dbReference>
<dbReference type="InterPro" id="IPR010294">
    <property type="entry name" value="ADAMTS_spacer1"/>
</dbReference>
<dbReference type="InterPro" id="IPR056272">
    <property type="entry name" value="ADAMTSL1_dom"/>
</dbReference>
<dbReference type="InterPro" id="IPR007110">
    <property type="entry name" value="Ig-like_dom"/>
</dbReference>
<dbReference type="InterPro" id="IPR036179">
    <property type="entry name" value="Ig-like_dom_sf"/>
</dbReference>
<dbReference type="InterPro" id="IPR013783">
    <property type="entry name" value="Ig-like_fold"/>
</dbReference>
<dbReference type="InterPro" id="IPR013098">
    <property type="entry name" value="Ig_I-set"/>
</dbReference>
<dbReference type="InterPro" id="IPR003599">
    <property type="entry name" value="Ig_sub"/>
</dbReference>
<dbReference type="InterPro" id="IPR003598">
    <property type="entry name" value="Ig_sub2"/>
</dbReference>
<dbReference type="InterPro" id="IPR010909">
    <property type="entry name" value="PLAC"/>
</dbReference>
<dbReference type="InterPro" id="IPR000884">
    <property type="entry name" value="TSP1_rpt"/>
</dbReference>
<dbReference type="InterPro" id="IPR036383">
    <property type="entry name" value="TSP1_rpt_sf"/>
</dbReference>
<dbReference type="PANTHER" id="PTHR13723">
    <property type="entry name" value="ADAMTS A DISINTEGRIN AND METALLOPROTEASE WITH THROMBOSPONDIN MOTIFS PROTEASE"/>
    <property type="match status" value="1"/>
</dbReference>
<dbReference type="PANTHER" id="PTHR13723:SF281">
    <property type="entry name" value="PAPILIN"/>
    <property type="match status" value="1"/>
</dbReference>
<dbReference type="Pfam" id="PF19236">
    <property type="entry name" value="ADAMTS_CR_3"/>
    <property type="match status" value="1"/>
</dbReference>
<dbReference type="Pfam" id="PF05986">
    <property type="entry name" value="ADAMTS_spacer1"/>
    <property type="match status" value="1"/>
</dbReference>
<dbReference type="Pfam" id="PF24484">
    <property type="entry name" value="ADAMTSL1"/>
    <property type="match status" value="1"/>
</dbReference>
<dbReference type="Pfam" id="PF07679">
    <property type="entry name" value="I-set"/>
    <property type="match status" value="2"/>
</dbReference>
<dbReference type="Pfam" id="PF13927">
    <property type="entry name" value="Ig_3"/>
    <property type="match status" value="2"/>
</dbReference>
<dbReference type="Pfam" id="PF08686">
    <property type="entry name" value="PLAC"/>
    <property type="match status" value="1"/>
</dbReference>
<dbReference type="Pfam" id="PF19030">
    <property type="entry name" value="TSP1_ADAMTS"/>
    <property type="match status" value="10"/>
</dbReference>
<dbReference type="Pfam" id="PF00090">
    <property type="entry name" value="TSP_1"/>
    <property type="match status" value="1"/>
</dbReference>
<dbReference type="PRINTS" id="PR01857">
    <property type="entry name" value="ADAMTSFAMILY"/>
</dbReference>
<dbReference type="SMART" id="SM00409">
    <property type="entry name" value="IG"/>
    <property type="match status" value="4"/>
</dbReference>
<dbReference type="SMART" id="SM00408">
    <property type="entry name" value="IGc2"/>
    <property type="match status" value="4"/>
</dbReference>
<dbReference type="SMART" id="SM00209">
    <property type="entry name" value="TSP1"/>
    <property type="match status" value="12"/>
</dbReference>
<dbReference type="SUPFAM" id="SSF48726">
    <property type="entry name" value="Immunoglobulin"/>
    <property type="match status" value="4"/>
</dbReference>
<dbReference type="SUPFAM" id="SSF82895">
    <property type="entry name" value="TSP-1 type 1 repeat"/>
    <property type="match status" value="10"/>
</dbReference>
<dbReference type="PROSITE" id="PS50835">
    <property type="entry name" value="IG_LIKE"/>
    <property type="match status" value="4"/>
</dbReference>
<dbReference type="PROSITE" id="PS50900">
    <property type="entry name" value="PLAC"/>
    <property type="match status" value="1"/>
</dbReference>
<dbReference type="PROSITE" id="PS50092">
    <property type="entry name" value="TSP1"/>
    <property type="match status" value="9"/>
</dbReference>
<gene>
    <name type="primary">Adamtsl1</name>
</gene>
<reference key="1">
    <citation type="journal article" date="2005" name="Science">
        <title>The transcriptional landscape of the mammalian genome.</title>
        <authorList>
            <person name="Carninci P."/>
            <person name="Kasukawa T."/>
            <person name="Katayama S."/>
            <person name="Gough J."/>
            <person name="Frith M.C."/>
            <person name="Maeda N."/>
            <person name="Oyama R."/>
            <person name="Ravasi T."/>
            <person name="Lenhard B."/>
            <person name="Wells C."/>
            <person name="Kodzius R."/>
            <person name="Shimokawa K."/>
            <person name="Bajic V.B."/>
            <person name="Brenner S.E."/>
            <person name="Batalov S."/>
            <person name="Forrest A.R."/>
            <person name="Zavolan M."/>
            <person name="Davis M.J."/>
            <person name="Wilming L.G."/>
            <person name="Aidinis V."/>
            <person name="Allen J.E."/>
            <person name="Ambesi-Impiombato A."/>
            <person name="Apweiler R."/>
            <person name="Aturaliya R.N."/>
            <person name="Bailey T.L."/>
            <person name="Bansal M."/>
            <person name="Baxter L."/>
            <person name="Beisel K.W."/>
            <person name="Bersano T."/>
            <person name="Bono H."/>
            <person name="Chalk A.M."/>
            <person name="Chiu K.P."/>
            <person name="Choudhary V."/>
            <person name="Christoffels A."/>
            <person name="Clutterbuck D.R."/>
            <person name="Crowe M.L."/>
            <person name="Dalla E."/>
            <person name="Dalrymple B.P."/>
            <person name="de Bono B."/>
            <person name="Della Gatta G."/>
            <person name="di Bernardo D."/>
            <person name="Down T."/>
            <person name="Engstrom P."/>
            <person name="Fagiolini M."/>
            <person name="Faulkner G."/>
            <person name="Fletcher C.F."/>
            <person name="Fukushima T."/>
            <person name="Furuno M."/>
            <person name="Futaki S."/>
            <person name="Gariboldi M."/>
            <person name="Georgii-Hemming P."/>
            <person name="Gingeras T.R."/>
            <person name="Gojobori T."/>
            <person name="Green R.E."/>
            <person name="Gustincich S."/>
            <person name="Harbers M."/>
            <person name="Hayashi Y."/>
            <person name="Hensch T.K."/>
            <person name="Hirokawa N."/>
            <person name="Hill D."/>
            <person name="Huminiecki L."/>
            <person name="Iacono M."/>
            <person name="Ikeo K."/>
            <person name="Iwama A."/>
            <person name="Ishikawa T."/>
            <person name="Jakt M."/>
            <person name="Kanapin A."/>
            <person name="Katoh M."/>
            <person name="Kawasawa Y."/>
            <person name="Kelso J."/>
            <person name="Kitamura H."/>
            <person name="Kitano H."/>
            <person name="Kollias G."/>
            <person name="Krishnan S.P."/>
            <person name="Kruger A."/>
            <person name="Kummerfeld S.K."/>
            <person name="Kurochkin I.V."/>
            <person name="Lareau L.F."/>
            <person name="Lazarevic D."/>
            <person name="Lipovich L."/>
            <person name="Liu J."/>
            <person name="Liuni S."/>
            <person name="McWilliam S."/>
            <person name="Madan Babu M."/>
            <person name="Madera M."/>
            <person name="Marchionni L."/>
            <person name="Matsuda H."/>
            <person name="Matsuzawa S."/>
            <person name="Miki H."/>
            <person name="Mignone F."/>
            <person name="Miyake S."/>
            <person name="Morris K."/>
            <person name="Mottagui-Tabar S."/>
            <person name="Mulder N."/>
            <person name="Nakano N."/>
            <person name="Nakauchi H."/>
            <person name="Ng P."/>
            <person name="Nilsson R."/>
            <person name="Nishiguchi S."/>
            <person name="Nishikawa S."/>
            <person name="Nori F."/>
            <person name="Ohara O."/>
            <person name="Okazaki Y."/>
            <person name="Orlando V."/>
            <person name="Pang K.C."/>
            <person name="Pavan W.J."/>
            <person name="Pavesi G."/>
            <person name="Pesole G."/>
            <person name="Petrovsky N."/>
            <person name="Piazza S."/>
            <person name="Reed J."/>
            <person name="Reid J.F."/>
            <person name="Ring B.Z."/>
            <person name="Ringwald M."/>
            <person name="Rost B."/>
            <person name="Ruan Y."/>
            <person name="Salzberg S.L."/>
            <person name="Sandelin A."/>
            <person name="Schneider C."/>
            <person name="Schoenbach C."/>
            <person name="Sekiguchi K."/>
            <person name="Semple C.A."/>
            <person name="Seno S."/>
            <person name="Sessa L."/>
            <person name="Sheng Y."/>
            <person name="Shibata Y."/>
            <person name="Shimada H."/>
            <person name="Shimada K."/>
            <person name="Silva D."/>
            <person name="Sinclair B."/>
            <person name="Sperling S."/>
            <person name="Stupka E."/>
            <person name="Sugiura K."/>
            <person name="Sultana R."/>
            <person name="Takenaka Y."/>
            <person name="Taki K."/>
            <person name="Tammoja K."/>
            <person name="Tan S.L."/>
            <person name="Tang S."/>
            <person name="Taylor M.S."/>
            <person name="Tegner J."/>
            <person name="Teichmann S.A."/>
            <person name="Ueda H.R."/>
            <person name="van Nimwegen E."/>
            <person name="Verardo R."/>
            <person name="Wei C.L."/>
            <person name="Yagi K."/>
            <person name="Yamanishi H."/>
            <person name="Zabarovsky E."/>
            <person name="Zhu S."/>
            <person name="Zimmer A."/>
            <person name="Hide W."/>
            <person name="Bult C."/>
            <person name="Grimmond S.M."/>
            <person name="Teasdale R.D."/>
            <person name="Liu E.T."/>
            <person name="Brusic V."/>
            <person name="Quackenbush J."/>
            <person name="Wahlestedt C."/>
            <person name="Mattick J.S."/>
            <person name="Hume D.A."/>
            <person name="Kai C."/>
            <person name="Sasaki D."/>
            <person name="Tomaru Y."/>
            <person name="Fukuda S."/>
            <person name="Kanamori-Katayama M."/>
            <person name="Suzuki M."/>
            <person name="Aoki J."/>
            <person name="Arakawa T."/>
            <person name="Iida J."/>
            <person name="Imamura K."/>
            <person name="Itoh M."/>
            <person name="Kato T."/>
            <person name="Kawaji H."/>
            <person name="Kawagashira N."/>
            <person name="Kawashima T."/>
            <person name="Kojima M."/>
            <person name="Kondo S."/>
            <person name="Konno H."/>
            <person name="Nakano K."/>
            <person name="Ninomiya N."/>
            <person name="Nishio T."/>
            <person name="Okada M."/>
            <person name="Plessy C."/>
            <person name="Shibata K."/>
            <person name="Shiraki T."/>
            <person name="Suzuki S."/>
            <person name="Tagami M."/>
            <person name="Waki K."/>
            <person name="Watahiki A."/>
            <person name="Okamura-Oho Y."/>
            <person name="Suzuki H."/>
            <person name="Kawai J."/>
            <person name="Hayashizaki Y."/>
        </authorList>
    </citation>
    <scope>NUCLEOTIDE SEQUENCE [LARGE SCALE MRNA] (ISOFORM 2)</scope>
    <source>
        <strain>C57BL/6J</strain>
    </source>
</reference>
<reference key="2">
    <citation type="journal article" date="2009" name="PLoS Biol.">
        <title>Lineage-specific biology revealed by a finished genome assembly of the mouse.</title>
        <authorList>
            <person name="Church D.M."/>
            <person name="Goodstadt L."/>
            <person name="Hillier L.W."/>
            <person name="Zody M.C."/>
            <person name="Goldstein S."/>
            <person name="She X."/>
            <person name="Bult C.J."/>
            <person name="Agarwala R."/>
            <person name="Cherry J.L."/>
            <person name="DiCuccio M."/>
            <person name="Hlavina W."/>
            <person name="Kapustin Y."/>
            <person name="Meric P."/>
            <person name="Maglott D."/>
            <person name="Birtle Z."/>
            <person name="Marques A.C."/>
            <person name="Graves T."/>
            <person name="Zhou S."/>
            <person name="Teague B."/>
            <person name="Potamousis K."/>
            <person name="Churas C."/>
            <person name="Place M."/>
            <person name="Herschleb J."/>
            <person name="Runnheim R."/>
            <person name="Forrest D."/>
            <person name="Amos-Landgraf J."/>
            <person name="Schwartz D.C."/>
            <person name="Cheng Z."/>
            <person name="Lindblad-Toh K."/>
            <person name="Eichler E.E."/>
            <person name="Ponting C.P."/>
        </authorList>
    </citation>
    <scope>NUCLEOTIDE SEQUENCE [LARGE SCALE GENOMIC DNA]</scope>
    <source>
        <strain>C57BL/6J</strain>
    </source>
</reference>
<sequence length="1745" mass="192008">MECCRRAAPGTPLLVLAFLLLSSRTARSEEDREGLWDAWGPWSECSRTCGGGASYSLRRCLSSKSCEGRNIRYRTCSNVDCPPEAGDFRAQQCSAHNDVKYHGQLYEWLPVSNDPDNPCSLKCQAKGTSLVVELAPKVLDGTRCYTESLDMCISGLCQIVGCDHQLGSTVKEDNCGVCNGDGSTCRLVRGQYKSQLSASKSDDTVVAIPYGSRHIRLVLKGPDHLYLETKTLQGTKGENSLSSTGIFLVDNSTVDFQKLPDKEILRMTGPLTADFIIKIHDLGPADSTVQFIFYQPIIHRWRETDFFPCSATCGGGYQLTSAECYDLRSNRVVADQYCHYYPENVKPKPKLQECNLDPCPASDGYKQIMPYDLYHPLPRWEATPWTACSSSCGGGIQSRAVSCVEEDIQGHVTSVEEWKCMYTPKMPVVQPCNIFDCPKWLAQEWSPCTVTCGQGLRYRVVLCIDHRGMHTGGCSAKTKPHIKEECIIPTPCYKPREKLPIEAKLPWFKQAQELEEGAAVSEEPSFIPEAWSACTVTCGVGTQVRIIRCQVLLPFSQSVADLPADECEGPKPASQRACYAGPCNGETPEFNPDNGDGLLGGLQDLDELYDWEYEGFTKCSESCGGGVQEAVVSCLNKQTRELADENLCVTSRRPPQLLKSCNLDPCPASHLLSREMNEVVVLADELCHHPKPSTVQACNRFNCPPAWYPAQWQLCSRTCGGGIQKRDVLCKQRMADGSFLELPETFCSASKPTSHQGCKKDDCPSEWLLSEWSECSVSCGEGTQTRSAICQRVLKTGVSTVVNSTLCPPLPFSSSIRPCMLATCARPGRPSTKHSPHIAAARNIYIQTRRQRKLHFVVGGFAYLLPKTTVVLRCPTRRFRKPLITWEKDGQHSISSAHVTVAPFGYLKIHRLKPSDAGIYTCSAGPAREQFVIKLIGGNRKLVARPLSLWSEEEEALQVRKTNPKEALQTHKHQNGIFSNGSKAEKRGLTADPGNRYDDIVSRLLEQGGWPGELLASWEVQDSAERNASSEEDPNAEQALLHLPFTMVAEQKRLDDILRNLSQQPEELRDLYSKHLVAQLAQDIFRSHLENQDLLPKPSEQRFPPMAVPAHKHVSGFSSSLRSSSGEAGGGSRRPHRKPAILRKISAAQQLSASEVVTHLGQTVALASGTLSVLLHCEAVGNPRPTIHWTRNGEAVQFSDRILLQPDDSLQILAPVEADVGFYTCNATNALGYDSVSIAVTLAGKPLVKTSRMTVLNTEKPTVTVDIGGTVRTVRGVNVTINCQVAGVPEAEVTWFRNKSKLGSSHHLHEGSSHHLHEGSLLLTDVSFSDQGLYSCRAANLHGEQTESTQLLILDPPQVPTQLEDIRALLLATGPNLPSVLMSPLGTQLVLDPGNSALLGCPIKGHPTPNITWFQNGQPIATAPGLTHHIWGAGQILRVANLSGGPQGEFSCLAQNEAGTLLQKASLVIQDYWWSVDRLATCSASCGNRGIHQPRLRCLLNTTEVDPEHCTGKPRPAVQPVACNRRDCPSRWMVTSWSACTRSCGGGVQTRRVTCQKLKASGISTPVSNDMCSQLAKRPVDTQACNQQLCVEWAFSSWGQCNGPCIGPRLAVQHRQVFCQTRDGITLPSEQCSALPRPVSTQNCWSEACSVHWRVSLWTLCTATCGNYGFQSRRVECVHVRTNKAVPEHLCSWGPRPANWQRCNVTPCENTECRDTTRYCEKVRQLKLCQLGQFRSRCCGTCGKA</sequence>
<proteinExistence type="evidence at transcript level"/>